<accession>Q1Q8S2</accession>
<keyword id="KW-0548">Nucleotidyltransferase</keyword>
<keyword id="KW-0694">RNA-binding</keyword>
<keyword id="KW-0698">rRNA processing</keyword>
<keyword id="KW-0808">Transferase</keyword>
<keyword id="KW-0819">tRNA processing</keyword>
<keyword id="KW-0820">tRNA-binding</keyword>
<proteinExistence type="inferred from homology"/>
<evidence type="ECO:0000255" key="1">
    <source>
        <dbReference type="HAMAP-Rule" id="MF_00564"/>
    </source>
</evidence>
<feature type="chain" id="PRO_1000024857" description="Ribonuclease PH">
    <location>
        <begin position="1"/>
        <end position="238"/>
    </location>
</feature>
<feature type="binding site" evidence="1">
    <location>
        <position position="86"/>
    </location>
    <ligand>
        <name>phosphate</name>
        <dbReference type="ChEBI" id="CHEBI:43474"/>
        <note>substrate</note>
    </ligand>
</feature>
<feature type="binding site" evidence="1">
    <location>
        <begin position="124"/>
        <end position="126"/>
    </location>
    <ligand>
        <name>phosphate</name>
        <dbReference type="ChEBI" id="CHEBI:43474"/>
        <note>substrate</note>
    </ligand>
</feature>
<protein>
    <recommendedName>
        <fullName evidence="1">Ribonuclease PH</fullName>
        <shortName evidence="1">RNase PH</shortName>
        <ecNumber evidence="1">2.7.7.56</ecNumber>
    </recommendedName>
    <alternativeName>
        <fullName evidence="1">tRNA nucleotidyltransferase</fullName>
    </alternativeName>
</protein>
<dbReference type="EC" id="2.7.7.56" evidence="1"/>
<dbReference type="EMBL" id="CP000323">
    <property type="protein sequence ID" value="ABE75931.1"/>
    <property type="molecule type" value="Genomic_DNA"/>
</dbReference>
<dbReference type="RefSeq" id="WP_011514467.1">
    <property type="nucleotide sequence ID" value="NC_007969.1"/>
</dbReference>
<dbReference type="SMR" id="Q1Q8S2"/>
<dbReference type="STRING" id="335284.Pcryo_2154"/>
<dbReference type="KEGG" id="pcr:Pcryo_2154"/>
<dbReference type="eggNOG" id="COG0689">
    <property type="taxonomic scope" value="Bacteria"/>
</dbReference>
<dbReference type="HOGENOM" id="CLU_050858_0_0_6"/>
<dbReference type="Proteomes" id="UP000002425">
    <property type="component" value="Chromosome"/>
</dbReference>
<dbReference type="GO" id="GO:0000175">
    <property type="term" value="F:3'-5'-RNA exonuclease activity"/>
    <property type="evidence" value="ECO:0007669"/>
    <property type="project" value="UniProtKB-UniRule"/>
</dbReference>
<dbReference type="GO" id="GO:0000049">
    <property type="term" value="F:tRNA binding"/>
    <property type="evidence" value="ECO:0007669"/>
    <property type="project" value="UniProtKB-UniRule"/>
</dbReference>
<dbReference type="GO" id="GO:0009022">
    <property type="term" value="F:tRNA nucleotidyltransferase activity"/>
    <property type="evidence" value="ECO:0007669"/>
    <property type="project" value="UniProtKB-UniRule"/>
</dbReference>
<dbReference type="GO" id="GO:0016075">
    <property type="term" value="P:rRNA catabolic process"/>
    <property type="evidence" value="ECO:0007669"/>
    <property type="project" value="UniProtKB-UniRule"/>
</dbReference>
<dbReference type="GO" id="GO:0006364">
    <property type="term" value="P:rRNA processing"/>
    <property type="evidence" value="ECO:0007669"/>
    <property type="project" value="UniProtKB-KW"/>
</dbReference>
<dbReference type="GO" id="GO:0008033">
    <property type="term" value="P:tRNA processing"/>
    <property type="evidence" value="ECO:0007669"/>
    <property type="project" value="UniProtKB-UniRule"/>
</dbReference>
<dbReference type="CDD" id="cd11362">
    <property type="entry name" value="RNase_PH_bact"/>
    <property type="match status" value="1"/>
</dbReference>
<dbReference type="FunFam" id="3.30.230.70:FF:000003">
    <property type="entry name" value="Ribonuclease PH"/>
    <property type="match status" value="1"/>
</dbReference>
<dbReference type="Gene3D" id="3.30.230.70">
    <property type="entry name" value="GHMP Kinase, N-terminal domain"/>
    <property type="match status" value="1"/>
</dbReference>
<dbReference type="HAMAP" id="MF_00564">
    <property type="entry name" value="RNase_PH"/>
    <property type="match status" value="1"/>
</dbReference>
<dbReference type="InterPro" id="IPR001247">
    <property type="entry name" value="ExoRNase_PH_dom1"/>
</dbReference>
<dbReference type="InterPro" id="IPR015847">
    <property type="entry name" value="ExoRNase_PH_dom2"/>
</dbReference>
<dbReference type="InterPro" id="IPR036345">
    <property type="entry name" value="ExoRNase_PH_dom2_sf"/>
</dbReference>
<dbReference type="InterPro" id="IPR027408">
    <property type="entry name" value="PNPase/RNase_PH_dom_sf"/>
</dbReference>
<dbReference type="InterPro" id="IPR020568">
    <property type="entry name" value="Ribosomal_Su5_D2-typ_SF"/>
</dbReference>
<dbReference type="InterPro" id="IPR050080">
    <property type="entry name" value="RNase_PH"/>
</dbReference>
<dbReference type="InterPro" id="IPR002381">
    <property type="entry name" value="RNase_PH_bac-type"/>
</dbReference>
<dbReference type="InterPro" id="IPR018336">
    <property type="entry name" value="RNase_PH_CS"/>
</dbReference>
<dbReference type="NCBIfam" id="TIGR01966">
    <property type="entry name" value="RNasePH"/>
    <property type="match status" value="1"/>
</dbReference>
<dbReference type="PANTHER" id="PTHR11953">
    <property type="entry name" value="EXOSOME COMPLEX COMPONENT"/>
    <property type="match status" value="1"/>
</dbReference>
<dbReference type="PANTHER" id="PTHR11953:SF0">
    <property type="entry name" value="EXOSOME COMPLEX COMPONENT RRP41"/>
    <property type="match status" value="1"/>
</dbReference>
<dbReference type="Pfam" id="PF01138">
    <property type="entry name" value="RNase_PH"/>
    <property type="match status" value="1"/>
</dbReference>
<dbReference type="Pfam" id="PF03725">
    <property type="entry name" value="RNase_PH_C"/>
    <property type="match status" value="1"/>
</dbReference>
<dbReference type="SUPFAM" id="SSF55666">
    <property type="entry name" value="Ribonuclease PH domain 2-like"/>
    <property type="match status" value="1"/>
</dbReference>
<dbReference type="SUPFAM" id="SSF54211">
    <property type="entry name" value="Ribosomal protein S5 domain 2-like"/>
    <property type="match status" value="1"/>
</dbReference>
<dbReference type="PROSITE" id="PS01277">
    <property type="entry name" value="RIBONUCLEASE_PH"/>
    <property type="match status" value="1"/>
</dbReference>
<comment type="function">
    <text evidence="1">Phosphorolytic 3'-5' exoribonuclease that plays an important role in tRNA 3'-end maturation. Removes nucleotide residues following the 3'-CCA terminus of tRNAs; can also add nucleotides to the ends of RNA molecules by using nucleoside diphosphates as substrates, but this may not be physiologically important. Probably plays a role in initiation of 16S rRNA degradation (leading to ribosome degradation) during starvation.</text>
</comment>
<comment type="catalytic activity">
    <reaction evidence="1">
        <text>tRNA(n+1) + phosphate = tRNA(n) + a ribonucleoside 5'-diphosphate</text>
        <dbReference type="Rhea" id="RHEA:10628"/>
        <dbReference type="Rhea" id="RHEA-COMP:17343"/>
        <dbReference type="Rhea" id="RHEA-COMP:17344"/>
        <dbReference type="ChEBI" id="CHEBI:43474"/>
        <dbReference type="ChEBI" id="CHEBI:57930"/>
        <dbReference type="ChEBI" id="CHEBI:173114"/>
        <dbReference type="EC" id="2.7.7.56"/>
    </reaction>
</comment>
<comment type="subunit">
    <text evidence="1">Homohexameric ring arranged as a trimer of dimers.</text>
</comment>
<comment type="similarity">
    <text evidence="1">Belongs to the RNase PH family.</text>
</comment>
<gene>
    <name evidence="1" type="primary">rph</name>
    <name type="ordered locus">Pcryo_2154</name>
</gene>
<reference key="1">
    <citation type="submission" date="2006-03" db="EMBL/GenBank/DDBJ databases">
        <title>Complete sequence of chromosome of Psychrobacter cryohalolentis K5.</title>
        <authorList>
            <consortium name="US DOE Joint Genome Institute"/>
            <person name="Copeland A."/>
            <person name="Lucas S."/>
            <person name="Lapidus A."/>
            <person name="Barry K."/>
            <person name="Detter J.C."/>
            <person name="Glavina T."/>
            <person name="Hammon N."/>
            <person name="Israni S."/>
            <person name="Dalin E."/>
            <person name="Tice H."/>
            <person name="Pitluck S."/>
            <person name="Brettin T."/>
            <person name="Bruce D."/>
            <person name="Han C."/>
            <person name="Tapia R."/>
            <person name="Sims D.R."/>
            <person name="Gilna P."/>
            <person name="Schmutz J."/>
            <person name="Larimer F."/>
            <person name="Land M."/>
            <person name="Hauser L."/>
            <person name="Kyrpides N."/>
            <person name="Kim E."/>
            <person name="Richardson P."/>
        </authorList>
    </citation>
    <scope>NUCLEOTIDE SEQUENCE [LARGE SCALE GENOMIC DNA]</scope>
    <source>
        <strain>ATCC BAA-1226 / DSM 17306 / VKM B-2378 / K5</strain>
    </source>
</reference>
<name>RNPH_PSYCK</name>
<sequence>MRIDNRELNQLRSISFERHYTKHAEGSVLVSFGDTKVLCTASVESGVPRWLKGKGKGWITAEYGMLPRATNTRNQREAARGKQSGRTQEIQRLIGRSLRAMIDLSKLGENTIYLDCDVLQADGGTRTASVTGAAIALIDALESIQKTKKLKADPLIGLVAAVSVGMKDGKAYLDLNYEEDASCDTDLNVVMTQKGEFIELQGTAEEKPFTRAQADDMLILAEKGIAELIAMQKTALGW</sequence>
<organism>
    <name type="scientific">Psychrobacter cryohalolentis (strain ATCC BAA-1226 / DSM 17306 / VKM B-2378 / K5)</name>
    <dbReference type="NCBI Taxonomy" id="335284"/>
    <lineage>
        <taxon>Bacteria</taxon>
        <taxon>Pseudomonadati</taxon>
        <taxon>Pseudomonadota</taxon>
        <taxon>Gammaproteobacteria</taxon>
        <taxon>Moraxellales</taxon>
        <taxon>Moraxellaceae</taxon>
        <taxon>Psychrobacter</taxon>
    </lineage>
</organism>